<protein>
    <recommendedName>
        <fullName>Transcriptional activator BRRF1</fullName>
    </recommendedName>
</protein>
<organism>
    <name type="scientific">Epstein-Barr virus (strain GD1)</name>
    <name type="common">HHV-4</name>
    <name type="synonym">Human gammaherpesvirus 4</name>
    <dbReference type="NCBI Taxonomy" id="10376"/>
    <lineage>
        <taxon>Viruses</taxon>
        <taxon>Duplodnaviria</taxon>
        <taxon>Heunggongvirae</taxon>
        <taxon>Peploviricota</taxon>
        <taxon>Herviviricetes</taxon>
        <taxon>Herpesvirales</taxon>
        <taxon>Orthoherpesviridae</taxon>
        <taxon>Gammaherpesvirinae</taxon>
        <taxon>Lymphocryptovirus</taxon>
        <taxon>Lymphocryptovirus humangamma4</taxon>
    </lineage>
</organism>
<name>BRRF1_EBVG</name>
<accession>P0C722</accession>
<accession>Q777E3</accession>
<gene>
    <name type="ORF">BRRF1</name>
</gene>
<evidence type="ECO:0000250" key="1"/>
<evidence type="ECO:0000305" key="2"/>
<dbReference type="EMBL" id="AY961628">
    <property type="protein sequence ID" value="AAY41123.1"/>
    <property type="molecule type" value="Genomic_DNA"/>
</dbReference>
<dbReference type="RefSeq" id="YP_401675.1">
    <property type="nucleotide sequence ID" value="NC_007605.1"/>
</dbReference>
<dbReference type="SMR" id="P0C722"/>
<dbReference type="BioGRID" id="971770">
    <property type="interactions" value="2"/>
</dbReference>
<dbReference type="IntAct" id="P0C722">
    <property type="interactions" value="11"/>
</dbReference>
<dbReference type="DNASU" id="3783728"/>
<dbReference type="GeneID" id="3783728"/>
<dbReference type="KEGG" id="vg:3783728"/>
<dbReference type="Proteomes" id="UP000007641">
    <property type="component" value="Genome"/>
</dbReference>
<dbReference type="InterPro" id="IPR006878">
    <property type="entry name" value="Herpes_BBRF1"/>
</dbReference>
<dbReference type="Pfam" id="PF04793">
    <property type="entry name" value="Herpes_BBRF1"/>
    <property type="match status" value="1"/>
</dbReference>
<comment type="function">
    <text evidence="1">Enhances the ability of BRLF1 to induce lytic infection by cooperating with it to transcriptionally activate the BZLF1 promoter.</text>
</comment>
<comment type="similarity">
    <text evidence="2">Belongs to the lymphocryptovirus BBRF1 family.</text>
</comment>
<feature type="chain" id="PRO_0000382440" description="Transcriptional activator BRRF1">
    <location>
        <begin position="1"/>
        <end position="310"/>
    </location>
</feature>
<organismHost>
    <name type="scientific">Homo sapiens</name>
    <name type="common">Human</name>
    <dbReference type="NCBI Taxonomy" id="9606"/>
</organismHost>
<sequence>MASSNRGNARPLKSFLHELYLKHYPEVGDVVHLLNTIGVDCDLPPSHPLLTAQRGLFLARVLQAVQQHKLLEDTIVPKILKKLAYFLELLSYYSPKDEQRDIAEVLDHLKTNRDLGLDDRLWALIRKLRQDRHHASVNVLMPGSDYTAVSLQYYDGISIGMRKVIADVCRSGYASMPSMTATHNLSHQLLMASGPSEEPCAWRGFFNQVLLWTVALCKFRRCIYYNYIQGSIATISQLLHLEIKALCSWIISQDGMRLFQHSRPLLTLWESVAANQEVTDAITLPDCAEYIDLLKHTKHVLENCSAMQYK</sequence>
<keyword id="KW-0244">Early protein</keyword>
<keyword id="KW-0804">Transcription</keyword>
<keyword id="KW-0805">Transcription regulation</keyword>
<proteinExistence type="inferred from homology"/>
<reference key="1">
    <citation type="journal article" date="2005" name="J. Virol.">
        <title>Genomic sequence analysis of Epstein-Barr virus strain GD1 from a nasopharyngeal carcinoma patient.</title>
        <authorList>
            <person name="Zeng M.-S."/>
            <person name="Li D.-J."/>
            <person name="Liu Q.-L."/>
            <person name="Song L.-B."/>
            <person name="Li M.-Z."/>
            <person name="Zhang R.-H."/>
            <person name="Yu X.-J."/>
            <person name="Wang H.-M."/>
            <person name="Ernberg I."/>
            <person name="Zeng Y.-X."/>
        </authorList>
    </citation>
    <scope>NUCLEOTIDE SEQUENCE [LARGE SCALE GENOMIC DNA]</scope>
</reference>